<dbReference type="EMBL" id="LT708304">
    <property type="protein sequence ID" value="SIU00274.1"/>
    <property type="molecule type" value="Genomic_DNA"/>
</dbReference>
<dbReference type="RefSeq" id="NP_855323.1">
    <property type="nucleotide sequence ID" value="NC_002945.3"/>
</dbReference>
<dbReference type="RefSeq" id="WP_003408108.1">
    <property type="nucleotide sequence ID" value="NC_002945.4"/>
</dbReference>
<dbReference type="SMR" id="P66106"/>
<dbReference type="GeneID" id="45425613"/>
<dbReference type="KEGG" id="mbo:BQ2027_MB1670"/>
<dbReference type="PATRIC" id="fig|233413.5.peg.1823"/>
<dbReference type="Proteomes" id="UP000001419">
    <property type="component" value="Chromosome"/>
</dbReference>
<dbReference type="GO" id="GO:1990904">
    <property type="term" value="C:ribonucleoprotein complex"/>
    <property type="evidence" value="ECO:0007669"/>
    <property type="project" value="UniProtKB-KW"/>
</dbReference>
<dbReference type="GO" id="GO:0005840">
    <property type="term" value="C:ribosome"/>
    <property type="evidence" value="ECO:0007669"/>
    <property type="project" value="UniProtKB-KW"/>
</dbReference>
<dbReference type="GO" id="GO:0019843">
    <property type="term" value="F:rRNA binding"/>
    <property type="evidence" value="ECO:0007669"/>
    <property type="project" value="UniProtKB-UniRule"/>
</dbReference>
<dbReference type="GO" id="GO:0003735">
    <property type="term" value="F:structural constituent of ribosome"/>
    <property type="evidence" value="ECO:0007669"/>
    <property type="project" value="InterPro"/>
</dbReference>
<dbReference type="GO" id="GO:0000027">
    <property type="term" value="P:ribosomal large subunit assembly"/>
    <property type="evidence" value="ECO:0007669"/>
    <property type="project" value="UniProtKB-UniRule"/>
</dbReference>
<dbReference type="GO" id="GO:0006412">
    <property type="term" value="P:translation"/>
    <property type="evidence" value="ECO:0007669"/>
    <property type="project" value="InterPro"/>
</dbReference>
<dbReference type="CDD" id="cd07026">
    <property type="entry name" value="Ribosomal_L20"/>
    <property type="match status" value="1"/>
</dbReference>
<dbReference type="FunFam" id="1.10.1900.20:FF:000001">
    <property type="entry name" value="50S ribosomal protein L20"/>
    <property type="match status" value="1"/>
</dbReference>
<dbReference type="Gene3D" id="6.10.160.10">
    <property type="match status" value="1"/>
</dbReference>
<dbReference type="Gene3D" id="1.10.1900.20">
    <property type="entry name" value="Ribosomal protein L20"/>
    <property type="match status" value="1"/>
</dbReference>
<dbReference type="HAMAP" id="MF_00382">
    <property type="entry name" value="Ribosomal_bL20"/>
    <property type="match status" value="1"/>
</dbReference>
<dbReference type="InterPro" id="IPR005813">
    <property type="entry name" value="Ribosomal_bL20"/>
</dbReference>
<dbReference type="InterPro" id="IPR049946">
    <property type="entry name" value="RIBOSOMAL_L20_CS"/>
</dbReference>
<dbReference type="InterPro" id="IPR035566">
    <property type="entry name" value="Ribosomal_protein_bL20_C"/>
</dbReference>
<dbReference type="NCBIfam" id="TIGR01032">
    <property type="entry name" value="rplT_bact"/>
    <property type="match status" value="1"/>
</dbReference>
<dbReference type="PANTHER" id="PTHR10986">
    <property type="entry name" value="39S RIBOSOMAL PROTEIN L20"/>
    <property type="match status" value="1"/>
</dbReference>
<dbReference type="Pfam" id="PF00453">
    <property type="entry name" value="Ribosomal_L20"/>
    <property type="match status" value="1"/>
</dbReference>
<dbReference type="PRINTS" id="PR00062">
    <property type="entry name" value="RIBOSOMALL20"/>
</dbReference>
<dbReference type="SUPFAM" id="SSF74731">
    <property type="entry name" value="Ribosomal protein L20"/>
    <property type="match status" value="1"/>
</dbReference>
<dbReference type="PROSITE" id="PS00937">
    <property type="entry name" value="RIBOSOMAL_L20"/>
    <property type="match status" value="1"/>
</dbReference>
<organism>
    <name type="scientific">Mycobacterium bovis (strain ATCC BAA-935 / AF2122/97)</name>
    <dbReference type="NCBI Taxonomy" id="233413"/>
    <lineage>
        <taxon>Bacteria</taxon>
        <taxon>Bacillati</taxon>
        <taxon>Actinomycetota</taxon>
        <taxon>Actinomycetes</taxon>
        <taxon>Mycobacteriales</taxon>
        <taxon>Mycobacteriaceae</taxon>
        <taxon>Mycobacterium</taxon>
        <taxon>Mycobacterium tuberculosis complex</taxon>
    </lineage>
</organism>
<proteinExistence type="inferred from homology"/>
<protein>
    <recommendedName>
        <fullName evidence="2">Large ribosomal subunit protein bL20</fullName>
    </recommendedName>
    <alternativeName>
        <fullName>50S ribosomal protein L20</fullName>
    </alternativeName>
</protein>
<name>RL20_MYCBO</name>
<gene>
    <name type="primary">rplT</name>
    <name type="ordered locus">BQ2027_MB1670</name>
</gene>
<feature type="chain" id="PRO_0000177191" description="Large ribosomal subunit protein bL20">
    <location>
        <begin position="1"/>
        <end position="129"/>
    </location>
</feature>
<reference key="1">
    <citation type="journal article" date="2003" name="Proc. Natl. Acad. Sci. U.S.A.">
        <title>The complete genome sequence of Mycobacterium bovis.</title>
        <authorList>
            <person name="Garnier T."/>
            <person name="Eiglmeier K."/>
            <person name="Camus J.-C."/>
            <person name="Medina N."/>
            <person name="Mansoor H."/>
            <person name="Pryor M."/>
            <person name="Duthoy S."/>
            <person name="Grondin S."/>
            <person name="Lacroix C."/>
            <person name="Monsempe C."/>
            <person name="Simon S."/>
            <person name="Harris B."/>
            <person name="Atkin R."/>
            <person name="Doggett J."/>
            <person name="Mayes R."/>
            <person name="Keating L."/>
            <person name="Wheeler P.R."/>
            <person name="Parkhill J."/>
            <person name="Barrell B.G."/>
            <person name="Cole S.T."/>
            <person name="Gordon S.V."/>
            <person name="Hewinson R.G."/>
        </authorList>
    </citation>
    <scope>NUCLEOTIDE SEQUENCE [LARGE SCALE GENOMIC DNA]</scope>
    <source>
        <strain>ATCC BAA-935 / AF2122/97</strain>
    </source>
</reference>
<reference key="2">
    <citation type="journal article" date="2017" name="Genome Announc.">
        <title>Updated reference genome sequence and annotation of Mycobacterium bovis AF2122/97.</title>
        <authorList>
            <person name="Malone K.M."/>
            <person name="Farrell D."/>
            <person name="Stuber T.P."/>
            <person name="Schubert O.T."/>
            <person name="Aebersold R."/>
            <person name="Robbe-Austerman S."/>
            <person name="Gordon S.V."/>
        </authorList>
    </citation>
    <scope>NUCLEOTIDE SEQUENCE [LARGE SCALE GENOMIC DNA]</scope>
    <scope>GENOME REANNOTATION</scope>
    <source>
        <strain>ATCC BAA-935 / AF2122/97</strain>
    </source>
</reference>
<evidence type="ECO:0000250" key="1"/>
<evidence type="ECO:0000305" key="2"/>
<accession>P66106</accession>
<accession>A0A1R3XZS6</accession>
<accession>P94977</accession>
<accession>X2BIF3</accession>
<comment type="function">
    <text evidence="1">Binds directly to 23S ribosomal RNA and is necessary for the in vitro assembly process of the 50S ribosomal subunit. It is not involved in the protein synthesizing functions of that subunit (By similarity).</text>
</comment>
<comment type="similarity">
    <text evidence="2">Belongs to the bacterial ribosomal protein bL20 family.</text>
</comment>
<keyword id="KW-1185">Reference proteome</keyword>
<keyword id="KW-0687">Ribonucleoprotein</keyword>
<keyword id="KW-0689">Ribosomal protein</keyword>
<keyword id="KW-0694">RNA-binding</keyword>
<keyword id="KW-0699">rRNA-binding</keyword>
<sequence>MARVKRAVNAHKKRRSILKASRGYRGQRSRLYRKAKEQQLHSLNYAYRDRRARKGEFRKLWIARINAAARLNDITYNRLIQGLKAAGVEVDRKNLADIAISDPAAFTALVDVARAALPEDVNAPSGEAA</sequence>